<reference key="1">
    <citation type="submission" date="2008-02" db="EMBL/GenBank/DDBJ databases">
        <title>Complete sequence of Synechococcus sp. PCC 7002.</title>
        <authorList>
            <person name="Li T."/>
            <person name="Zhao J."/>
            <person name="Zhao C."/>
            <person name="Liu Z."/>
            <person name="Zhao F."/>
            <person name="Marquardt J."/>
            <person name="Nomura C.T."/>
            <person name="Persson S."/>
            <person name="Detter J.C."/>
            <person name="Richardson P.M."/>
            <person name="Lanz C."/>
            <person name="Schuster S.C."/>
            <person name="Wang J."/>
            <person name="Li S."/>
            <person name="Huang X."/>
            <person name="Cai T."/>
            <person name="Yu Z."/>
            <person name="Luo J."/>
            <person name="Zhao J."/>
            <person name="Bryant D.A."/>
        </authorList>
    </citation>
    <scope>NUCLEOTIDE SEQUENCE [LARGE SCALE GENOMIC DNA]</scope>
    <source>
        <strain>ATCC 27264 / PCC 7002 / PR-6</strain>
    </source>
</reference>
<proteinExistence type="inferred from homology"/>
<protein>
    <recommendedName>
        <fullName evidence="1">Phosphoglucosamine mutase</fullName>
        <ecNumber evidence="1">5.4.2.10</ecNumber>
    </recommendedName>
</protein>
<keyword id="KW-0413">Isomerase</keyword>
<keyword id="KW-0460">Magnesium</keyword>
<keyword id="KW-0479">Metal-binding</keyword>
<keyword id="KW-0597">Phosphoprotein</keyword>
<keyword id="KW-1185">Reference proteome</keyword>
<accession>B1XP15</accession>
<comment type="function">
    <text evidence="1">Catalyzes the conversion of glucosamine-6-phosphate to glucosamine-1-phosphate.</text>
</comment>
<comment type="catalytic activity">
    <reaction evidence="1">
        <text>alpha-D-glucosamine 1-phosphate = D-glucosamine 6-phosphate</text>
        <dbReference type="Rhea" id="RHEA:23424"/>
        <dbReference type="ChEBI" id="CHEBI:58516"/>
        <dbReference type="ChEBI" id="CHEBI:58725"/>
        <dbReference type="EC" id="5.4.2.10"/>
    </reaction>
</comment>
<comment type="cofactor">
    <cofactor evidence="1">
        <name>Mg(2+)</name>
        <dbReference type="ChEBI" id="CHEBI:18420"/>
    </cofactor>
    <text evidence="1">Binds 1 Mg(2+) ion per subunit.</text>
</comment>
<comment type="PTM">
    <text evidence="1">Activated by phosphorylation.</text>
</comment>
<comment type="similarity">
    <text evidence="1">Belongs to the phosphohexose mutase family.</text>
</comment>
<organism>
    <name type="scientific">Picosynechococcus sp. (strain ATCC 27264 / PCC 7002 / PR-6)</name>
    <name type="common">Agmenellum quadruplicatum</name>
    <dbReference type="NCBI Taxonomy" id="32049"/>
    <lineage>
        <taxon>Bacteria</taxon>
        <taxon>Bacillati</taxon>
        <taxon>Cyanobacteriota</taxon>
        <taxon>Cyanophyceae</taxon>
        <taxon>Oscillatoriophycideae</taxon>
        <taxon>Chroococcales</taxon>
        <taxon>Geminocystaceae</taxon>
        <taxon>Picosynechococcus</taxon>
    </lineage>
</organism>
<evidence type="ECO:0000255" key="1">
    <source>
        <dbReference type="HAMAP-Rule" id="MF_01554"/>
    </source>
</evidence>
<feature type="chain" id="PRO_0000343602" description="Phosphoglucosamine mutase">
    <location>
        <begin position="1"/>
        <end position="481"/>
    </location>
</feature>
<feature type="active site" description="Phosphoserine intermediate" evidence="1">
    <location>
        <position position="129"/>
    </location>
</feature>
<feature type="binding site" description="via phosphate group" evidence="1">
    <location>
        <position position="129"/>
    </location>
    <ligand>
        <name>Mg(2+)</name>
        <dbReference type="ChEBI" id="CHEBI:18420"/>
    </ligand>
</feature>
<feature type="binding site" evidence="1">
    <location>
        <position position="271"/>
    </location>
    <ligand>
        <name>Mg(2+)</name>
        <dbReference type="ChEBI" id="CHEBI:18420"/>
    </ligand>
</feature>
<feature type="binding site" evidence="1">
    <location>
        <position position="273"/>
    </location>
    <ligand>
        <name>Mg(2+)</name>
        <dbReference type="ChEBI" id="CHEBI:18420"/>
    </ligand>
</feature>
<feature type="binding site" evidence="1">
    <location>
        <position position="275"/>
    </location>
    <ligand>
        <name>Mg(2+)</name>
        <dbReference type="ChEBI" id="CHEBI:18420"/>
    </ligand>
</feature>
<feature type="modified residue" description="Phosphoserine" evidence="1">
    <location>
        <position position="129"/>
    </location>
</feature>
<gene>
    <name evidence="1" type="primary">glmM</name>
    <name type="ordered locus">SYNPCC7002_A0450</name>
</gene>
<dbReference type="EC" id="5.4.2.10" evidence="1"/>
<dbReference type="EMBL" id="CP000951">
    <property type="protein sequence ID" value="ACA98458.1"/>
    <property type="molecule type" value="Genomic_DNA"/>
</dbReference>
<dbReference type="SMR" id="B1XP15"/>
<dbReference type="STRING" id="32049.SYNPCC7002_A0450"/>
<dbReference type="KEGG" id="syp:SYNPCC7002_A0450"/>
<dbReference type="eggNOG" id="COG1109">
    <property type="taxonomic scope" value="Bacteria"/>
</dbReference>
<dbReference type="HOGENOM" id="CLU_016950_7_0_3"/>
<dbReference type="Proteomes" id="UP000001688">
    <property type="component" value="Chromosome"/>
</dbReference>
<dbReference type="GO" id="GO:0005829">
    <property type="term" value="C:cytosol"/>
    <property type="evidence" value="ECO:0007669"/>
    <property type="project" value="TreeGrafter"/>
</dbReference>
<dbReference type="GO" id="GO:0000287">
    <property type="term" value="F:magnesium ion binding"/>
    <property type="evidence" value="ECO:0007669"/>
    <property type="project" value="UniProtKB-UniRule"/>
</dbReference>
<dbReference type="GO" id="GO:0008966">
    <property type="term" value="F:phosphoglucosamine mutase activity"/>
    <property type="evidence" value="ECO:0007669"/>
    <property type="project" value="UniProtKB-UniRule"/>
</dbReference>
<dbReference type="GO" id="GO:0004615">
    <property type="term" value="F:phosphomannomutase activity"/>
    <property type="evidence" value="ECO:0007669"/>
    <property type="project" value="TreeGrafter"/>
</dbReference>
<dbReference type="GO" id="GO:0005975">
    <property type="term" value="P:carbohydrate metabolic process"/>
    <property type="evidence" value="ECO:0007669"/>
    <property type="project" value="InterPro"/>
</dbReference>
<dbReference type="GO" id="GO:0009252">
    <property type="term" value="P:peptidoglycan biosynthetic process"/>
    <property type="evidence" value="ECO:0007669"/>
    <property type="project" value="TreeGrafter"/>
</dbReference>
<dbReference type="GO" id="GO:0006048">
    <property type="term" value="P:UDP-N-acetylglucosamine biosynthetic process"/>
    <property type="evidence" value="ECO:0007669"/>
    <property type="project" value="TreeGrafter"/>
</dbReference>
<dbReference type="CDD" id="cd05802">
    <property type="entry name" value="GlmM"/>
    <property type="match status" value="1"/>
</dbReference>
<dbReference type="FunFam" id="3.30.310.50:FF:000001">
    <property type="entry name" value="Phosphoglucosamine mutase"/>
    <property type="match status" value="1"/>
</dbReference>
<dbReference type="FunFam" id="3.40.120.10:FF:000001">
    <property type="entry name" value="Phosphoglucosamine mutase"/>
    <property type="match status" value="1"/>
</dbReference>
<dbReference type="FunFam" id="3.40.120.10:FF:000003">
    <property type="entry name" value="Phosphoglucosamine mutase"/>
    <property type="match status" value="1"/>
</dbReference>
<dbReference type="Gene3D" id="3.40.120.10">
    <property type="entry name" value="Alpha-D-Glucose-1,6-Bisphosphate, subunit A, domain 3"/>
    <property type="match status" value="3"/>
</dbReference>
<dbReference type="Gene3D" id="3.30.310.50">
    <property type="entry name" value="Alpha-D-phosphohexomutase, C-terminal domain"/>
    <property type="match status" value="1"/>
</dbReference>
<dbReference type="HAMAP" id="MF_01554_B">
    <property type="entry name" value="GlmM_B"/>
    <property type="match status" value="1"/>
</dbReference>
<dbReference type="InterPro" id="IPR005844">
    <property type="entry name" value="A-D-PHexomutase_a/b/a-I"/>
</dbReference>
<dbReference type="InterPro" id="IPR016055">
    <property type="entry name" value="A-D-PHexomutase_a/b/a-I/II/III"/>
</dbReference>
<dbReference type="InterPro" id="IPR005845">
    <property type="entry name" value="A-D-PHexomutase_a/b/a-II"/>
</dbReference>
<dbReference type="InterPro" id="IPR005846">
    <property type="entry name" value="A-D-PHexomutase_a/b/a-III"/>
</dbReference>
<dbReference type="InterPro" id="IPR005843">
    <property type="entry name" value="A-D-PHexomutase_C"/>
</dbReference>
<dbReference type="InterPro" id="IPR036900">
    <property type="entry name" value="A-D-PHexomutase_C_sf"/>
</dbReference>
<dbReference type="InterPro" id="IPR016066">
    <property type="entry name" value="A-D-PHexomutase_CS"/>
</dbReference>
<dbReference type="InterPro" id="IPR005841">
    <property type="entry name" value="Alpha-D-phosphohexomutase_SF"/>
</dbReference>
<dbReference type="InterPro" id="IPR006352">
    <property type="entry name" value="GlmM_bact"/>
</dbReference>
<dbReference type="InterPro" id="IPR050060">
    <property type="entry name" value="Phosphoglucosamine_mutase"/>
</dbReference>
<dbReference type="NCBIfam" id="TIGR01455">
    <property type="entry name" value="glmM"/>
    <property type="match status" value="1"/>
</dbReference>
<dbReference type="PANTHER" id="PTHR42946:SF1">
    <property type="entry name" value="PHOSPHOGLUCOMUTASE (ALPHA-D-GLUCOSE-1,6-BISPHOSPHATE-DEPENDENT)"/>
    <property type="match status" value="1"/>
</dbReference>
<dbReference type="PANTHER" id="PTHR42946">
    <property type="entry name" value="PHOSPHOHEXOSE MUTASE"/>
    <property type="match status" value="1"/>
</dbReference>
<dbReference type="Pfam" id="PF02878">
    <property type="entry name" value="PGM_PMM_I"/>
    <property type="match status" value="1"/>
</dbReference>
<dbReference type="Pfam" id="PF02879">
    <property type="entry name" value="PGM_PMM_II"/>
    <property type="match status" value="1"/>
</dbReference>
<dbReference type="Pfam" id="PF02880">
    <property type="entry name" value="PGM_PMM_III"/>
    <property type="match status" value="1"/>
</dbReference>
<dbReference type="Pfam" id="PF00408">
    <property type="entry name" value="PGM_PMM_IV"/>
    <property type="match status" value="1"/>
</dbReference>
<dbReference type="PRINTS" id="PR00509">
    <property type="entry name" value="PGMPMM"/>
</dbReference>
<dbReference type="SUPFAM" id="SSF55957">
    <property type="entry name" value="Phosphoglucomutase, C-terminal domain"/>
    <property type="match status" value="1"/>
</dbReference>
<dbReference type="SUPFAM" id="SSF53738">
    <property type="entry name" value="Phosphoglucomutase, first 3 domains"/>
    <property type="match status" value="3"/>
</dbReference>
<dbReference type="PROSITE" id="PS00710">
    <property type="entry name" value="PGM_PMM"/>
    <property type="match status" value="1"/>
</dbReference>
<sequence>MMIMPEEGHPLSRMLASYPPQALRCDLPAGSLFGTDGIRGKAGDLLTAPFALQVGYWAGQVLQETAARRAPVIIGQDSRNSSDMLAMAIAAGLTASGLEVWHVGLCPTPCVSYLARTTDAIGGIMISASHNPPEDNGIKFFSDAGTKLLKDLSAKIEAGLRGDRLENILSQTNNCGSYQHQKELTQQYRNAVFATLPQGLSLDGLKIVLDLAWGASVHLAPELFQALGAEVIALHHQPDGNKINVNCGSTHIDQLQGAVQFHNADLGFAFDGDADRVIAVDNTGRIVDGDYILYLWGKQLQAAGQLPNNLIVGTVMANLGFERAWEKLGGQLHRTAVGDQYVQAAMWQTGAMLGGEQSGHILCHHHSVSGDGIQTALHLAALVREAGVPLNELIDQSFQTYPQFLKNVRVEDRDRRLNWQNCDVLQTEIAKAEAAMGDKGRVLVRASGTEPVIRVMVEAEEQYLAEYWTQHLVNVVQSHLG</sequence>
<name>GLMM_PICP2</name>